<gene>
    <name evidence="1" type="primary">pheS</name>
    <name type="ordered locus">WS1307</name>
</gene>
<comment type="catalytic activity">
    <reaction evidence="1">
        <text>tRNA(Phe) + L-phenylalanine + ATP = L-phenylalanyl-tRNA(Phe) + AMP + diphosphate + H(+)</text>
        <dbReference type="Rhea" id="RHEA:19413"/>
        <dbReference type="Rhea" id="RHEA-COMP:9668"/>
        <dbReference type="Rhea" id="RHEA-COMP:9699"/>
        <dbReference type="ChEBI" id="CHEBI:15378"/>
        <dbReference type="ChEBI" id="CHEBI:30616"/>
        <dbReference type="ChEBI" id="CHEBI:33019"/>
        <dbReference type="ChEBI" id="CHEBI:58095"/>
        <dbReference type="ChEBI" id="CHEBI:78442"/>
        <dbReference type="ChEBI" id="CHEBI:78531"/>
        <dbReference type="ChEBI" id="CHEBI:456215"/>
        <dbReference type="EC" id="6.1.1.20"/>
    </reaction>
</comment>
<comment type="cofactor">
    <cofactor evidence="1">
        <name>Mg(2+)</name>
        <dbReference type="ChEBI" id="CHEBI:18420"/>
    </cofactor>
    <text evidence="1">Binds 2 magnesium ions per tetramer.</text>
</comment>
<comment type="subunit">
    <text evidence="1">Tetramer of two alpha and two beta subunits.</text>
</comment>
<comment type="subcellular location">
    <subcellularLocation>
        <location evidence="1">Cytoplasm</location>
    </subcellularLocation>
</comment>
<comment type="similarity">
    <text evidence="1">Belongs to the class-II aminoacyl-tRNA synthetase family. Phe-tRNA synthetase alpha subunit type 1 subfamily.</text>
</comment>
<organism>
    <name type="scientific">Wolinella succinogenes (strain ATCC 29543 / DSM 1740 / CCUG 13145 / JCM 31913 / LMG 7466 / NCTC 11488 / FDC 602W)</name>
    <name type="common">Vibrio succinogenes</name>
    <dbReference type="NCBI Taxonomy" id="273121"/>
    <lineage>
        <taxon>Bacteria</taxon>
        <taxon>Pseudomonadati</taxon>
        <taxon>Campylobacterota</taxon>
        <taxon>Epsilonproteobacteria</taxon>
        <taxon>Campylobacterales</taxon>
        <taxon>Helicobacteraceae</taxon>
        <taxon>Wolinella</taxon>
    </lineage>
</organism>
<proteinExistence type="inferred from homology"/>
<feature type="chain" id="PRO_0000126797" description="Phenylalanine--tRNA ligase alpha subunit">
    <location>
        <begin position="1"/>
        <end position="330"/>
    </location>
</feature>
<feature type="binding site" evidence="1">
    <location>
        <position position="246"/>
    </location>
    <ligand>
        <name>Mg(2+)</name>
        <dbReference type="ChEBI" id="CHEBI:18420"/>
        <note>shared with beta subunit</note>
    </ligand>
</feature>
<evidence type="ECO:0000255" key="1">
    <source>
        <dbReference type="HAMAP-Rule" id="MF_00281"/>
    </source>
</evidence>
<sequence length="330" mass="37842">MDSLINEIKSAQSSAELEELRIKALGKKGILTAQFALLKNLDEEEKKEKAKELNQLKGEFEREWTLKKEIIATEELHKKLLEEKVDMTLFAPSKGVGSAHPVMITMERIVDYFVSLNFAIKSGPLIEDDFHNFEALNLPKYHPARDMQDTFYFKDGMLLRTHTSPVQIRTMEKETPPIRMICPGAVFRRDYDLTHTPMFHQVEGLVVEEEGKVSFANLKYILEDFLRFMFGEVQVRFRTSFFPFTEPSAEVDISCIFCHGEGCRVCSHTGWLEVLGCGLVDENVFKAVGYKNVSGYAFGLGVERFAMLIHAVSDLRAFFESDLRVLEQFR</sequence>
<name>SYFA_WOLSU</name>
<keyword id="KW-0030">Aminoacyl-tRNA synthetase</keyword>
<keyword id="KW-0067">ATP-binding</keyword>
<keyword id="KW-0963">Cytoplasm</keyword>
<keyword id="KW-0436">Ligase</keyword>
<keyword id="KW-0460">Magnesium</keyword>
<keyword id="KW-0479">Metal-binding</keyword>
<keyword id="KW-0547">Nucleotide-binding</keyword>
<keyword id="KW-0648">Protein biosynthesis</keyword>
<keyword id="KW-1185">Reference proteome</keyword>
<protein>
    <recommendedName>
        <fullName evidence="1">Phenylalanine--tRNA ligase alpha subunit</fullName>
        <ecNumber evidence="1">6.1.1.20</ecNumber>
    </recommendedName>
    <alternativeName>
        <fullName evidence="1">Phenylalanyl-tRNA synthetase alpha subunit</fullName>
        <shortName evidence="1">PheRS</shortName>
    </alternativeName>
</protein>
<accession>Q7M8Y9</accession>
<dbReference type="EC" id="6.1.1.20" evidence="1"/>
<dbReference type="EMBL" id="BX571660">
    <property type="protein sequence ID" value="CAE10383.1"/>
    <property type="molecule type" value="Genomic_DNA"/>
</dbReference>
<dbReference type="RefSeq" id="WP_011139169.1">
    <property type="nucleotide sequence ID" value="NC_005090.1"/>
</dbReference>
<dbReference type="SMR" id="Q7M8Y9"/>
<dbReference type="STRING" id="273121.WS1307"/>
<dbReference type="KEGG" id="wsu:WS1307"/>
<dbReference type="eggNOG" id="COG0016">
    <property type="taxonomic scope" value="Bacteria"/>
</dbReference>
<dbReference type="HOGENOM" id="CLU_025086_0_1_7"/>
<dbReference type="Proteomes" id="UP000000422">
    <property type="component" value="Chromosome"/>
</dbReference>
<dbReference type="GO" id="GO:0005737">
    <property type="term" value="C:cytoplasm"/>
    <property type="evidence" value="ECO:0007669"/>
    <property type="project" value="UniProtKB-SubCell"/>
</dbReference>
<dbReference type="GO" id="GO:0005524">
    <property type="term" value="F:ATP binding"/>
    <property type="evidence" value="ECO:0007669"/>
    <property type="project" value="UniProtKB-UniRule"/>
</dbReference>
<dbReference type="GO" id="GO:0000287">
    <property type="term" value="F:magnesium ion binding"/>
    <property type="evidence" value="ECO:0007669"/>
    <property type="project" value="UniProtKB-UniRule"/>
</dbReference>
<dbReference type="GO" id="GO:0004826">
    <property type="term" value="F:phenylalanine-tRNA ligase activity"/>
    <property type="evidence" value="ECO:0007669"/>
    <property type="project" value="UniProtKB-UniRule"/>
</dbReference>
<dbReference type="GO" id="GO:0000049">
    <property type="term" value="F:tRNA binding"/>
    <property type="evidence" value="ECO:0007669"/>
    <property type="project" value="InterPro"/>
</dbReference>
<dbReference type="GO" id="GO:0006432">
    <property type="term" value="P:phenylalanyl-tRNA aminoacylation"/>
    <property type="evidence" value="ECO:0007669"/>
    <property type="project" value="UniProtKB-UniRule"/>
</dbReference>
<dbReference type="CDD" id="cd00496">
    <property type="entry name" value="PheRS_alpha_core"/>
    <property type="match status" value="1"/>
</dbReference>
<dbReference type="Gene3D" id="3.30.930.10">
    <property type="entry name" value="Bira Bifunctional Protein, Domain 2"/>
    <property type="match status" value="1"/>
</dbReference>
<dbReference type="HAMAP" id="MF_00281">
    <property type="entry name" value="Phe_tRNA_synth_alpha1"/>
    <property type="match status" value="1"/>
</dbReference>
<dbReference type="InterPro" id="IPR006195">
    <property type="entry name" value="aa-tRNA-synth_II"/>
</dbReference>
<dbReference type="InterPro" id="IPR045864">
    <property type="entry name" value="aa-tRNA-synth_II/BPL/LPL"/>
</dbReference>
<dbReference type="InterPro" id="IPR004529">
    <property type="entry name" value="Phe-tRNA-synth_IIc_asu"/>
</dbReference>
<dbReference type="InterPro" id="IPR004188">
    <property type="entry name" value="Phe-tRNA_ligase_II_N"/>
</dbReference>
<dbReference type="InterPro" id="IPR022911">
    <property type="entry name" value="Phe_tRNA_ligase_alpha1_bac"/>
</dbReference>
<dbReference type="InterPro" id="IPR002319">
    <property type="entry name" value="Phenylalanyl-tRNA_Synthase"/>
</dbReference>
<dbReference type="InterPro" id="IPR010978">
    <property type="entry name" value="tRNA-bd_arm"/>
</dbReference>
<dbReference type="NCBIfam" id="TIGR00468">
    <property type="entry name" value="pheS"/>
    <property type="match status" value="1"/>
</dbReference>
<dbReference type="PANTHER" id="PTHR11538:SF41">
    <property type="entry name" value="PHENYLALANINE--TRNA LIGASE, MITOCHONDRIAL"/>
    <property type="match status" value="1"/>
</dbReference>
<dbReference type="PANTHER" id="PTHR11538">
    <property type="entry name" value="PHENYLALANYL-TRNA SYNTHETASE"/>
    <property type="match status" value="1"/>
</dbReference>
<dbReference type="Pfam" id="PF02912">
    <property type="entry name" value="Phe_tRNA-synt_N"/>
    <property type="match status" value="1"/>
</dbReference>
<dbReference type="Pfam" id="PF01409">
    <property type="entry name" value="tRNA-synt_2d"/>
    <property type="match status" value="1"/>
</dbReference>
<dbReference type="SUPFAM" id="SSF55681">
    <property type="entry name" value="Class II aaRS and biotin synthetases"/>
    <property type="match status" value="1"/>
</dbReference>
<dbReference type="SUPFAM" id="SSF46589">
    <property type="entry name" value="tRNA-binding arm"/>
    <property type="match status" value="1"/>
</dbReference>
<dbReference type="PROSITE" id="PS50862">
    <property type="entry name" value="AA_TRNA_LIGASE_II"/>
    <property type="match status" value="1"/>
</dbReference>
<reference key="1">
    <citation type="journal article" date="2003" name="Proc. Natl. Acad. Sci. U.S.A.">
        <title>Complete genome sequence and analysis of Wolinella succinogenes.</title>
        <authorList>
            <person name="Baar C."/>
            <person name="Eppinger M."/>
            <person name="Raddatz G."/>
            <person name="Simon J."/>
            <person name="Lanz C."/>
            <person name="Klimmek O."/>
            <person name="Nandakumar R."/>
            <person name="Gross R."/>
            <person name="Rosinus A."/>
            <person name="Keller H."/>
            <person name="Jagtap P."/>
            <person name="Linke B."/>
            <person name="Meyer F."/>
            <person name="Lederer H."/>
            <person name="Schuster S.C."/>
        </authorList>
    </citation>
    <scope>NUCLEOTIDE SEQUENCE [LARGE SCALE GENOMIC DNA]</scope>
    <source>
        <strain>ATCC 29543 / DSM 1740 / CCUG 13145 / JCM 31913 / LMG 7466 / NCTC 11488 / FDC 602W</strain>
    </source>
</reference>